<proteinExistence type="evidence at transcript level"/>
<accession>Q58D79</accession>
<evidence type="ECO:0000250" key="1"/>
<evidence type="ECO:0000250" key="2">
    <source>
        <dbReference type="UniProtKB" id="Q768S4"/>
    </source>
</evidence>
<evidence type="ECO:0000255" key="3">
    <source>
        <dbReference type="PROSITE-ProRule" id="PRU00091"/>
    </source>
</evidence>
<evidence type="ECO:0000255" key="4">
    <source>
        <dbReference type="PROSITE-ProRule" id="PRU00234"/>
    </source>
</evidence>
<evidence type="ECO:0000256" key="5">
    <source>
        <dbReference type="SAM" id="MobiDB-lite"/>
    </source>
</evidence>
<reference key="1">
    <citation type="journal article" date="2005" name="BMC Genomics">
        <title>Characterization of 954 bovine full-CDS cDNA sequences.</title>
        <authorList>
            <person name="Harhay G.P."/>
            <person name="Sonstegard T.S."/>
            <person name="Keele J.W."/>
            <person name="Heaton M.P."/>
            <person name="Clawson M.L."/>
            <person name="Snelling W.M."/>
            <person name="Wiedmann R.T."/>
            <person name="Van Tassell C.P."/>
            <person name="Smith T.P.L."/>
        </authorList>
    </citation>
    <scope>NUCLEOTIDE SEQUENCE [LARGE SCALE MRNA]</scope>
</reference>
<reference key="2">
    <citation type="submission" date="2005-08" db="EMBL/GenBank/DDBJ databases">
        <authorList>
            <consortium name="NIH - Mammalian Gene Collection (MGC) project"/>
        </authorList>
    </citation>
    <scope>NUCLEOTIDE SEQUENCE [LARGE SCALE MRNA]</scope>
    <source>
        <strain>Crossbred X Angus</strain>
        <tissue>Ileum</tissue>
    </source>
</reference>
<dbReference type="EMBL" id="BT021718">
    <property type="protein sequence ID" value="AAX46565.1"/>
    <property type="molecule type" value="mRNA"/>
</dbReference>
<dbReference type="EMBL" id="BC102095">
    <property type="protein sequence ID" value="AAI02096.1"/>
    <property type="molecule type" value="mRNA"/>
</dbReference>
<dbReference type="RefSeq" id="NP_001030571.1">
    <property type="nucleotide sequence ID" value="NM_001035494.2"/>
</dbReference>
<dbReference type="SMR" id="Q58D79"/>
<dbReference type="FunCoup" id="Q58D79">
    <property type="interactions" value="51"/>
</dbReference>
<dbReference type="STRING" id="9913.ENSBTAP00000067996"/>
<dbReference type="PaxDb" id="9913-ENSBTAP00000050227"/>
<dbReference type="GeneID" id="617294"/>
<dbReference type="KEGG" id="bta:617294"/>
<dbReference type="CTD" id="9501"/>
<dbReference type="eggNOG" id="KOG1013">
    <property type="taxonomic scope" value="Eukaryota"/>
</dbReference>
<dbReference type="HOGENOM" id="CLU_076502_1_0_1"/>
<dbReference type="InParanoid" id="Q58D79"/>
<dbReference type="OrthoDB" id="270970at2759"/>
<dbReference type="Proteomes" id="UP000009136">
    <property type="component" value="Unplaced"/>
</dbReference>
<dbReference type="GO" id="GO:0098793">
    <property type="term" value="C:presynapse"/>
    <property type="evidence" value="ECO:0007669"/>
    <property type="project" value="GOC"/>
</dbReference>
<dbReference type="GO" id="GO:0045202">
    <property type="term" value="C:synapse"/>
    <property type="evidence" value="ECO:0000318"/>
    <property type="project" value="GO_Central"/>
</dbReference>
<dbReference type="GO" id="GO:0030658">
    <property type="term" value="C:transport vesicle membrane"/>
    <property type="evidence" value="ECO:0007669"/>
    <property type="project" value="UniProtKB-SubCell"/>
</dbReference>
<dbReference type="GO" id="GO:0031267">
    <property type="term" value="F:small GTPase binding"/>
    <property type="evidence" value="ECO:0007669"/>
    <property type="project" value="InterPro"/>
</dbReference>
<dbReference type="GO" id="GO:0008270">
    <property type="term" value="F:zinc ion binding"/>
    <property type="evidence" value="ECO:0007669"/>
    <property type="project" value="UniProtKB-KW"/>
</dbReference>
<dbReference type="GO" id="GO:0099502">
    <property type="term" value="P:calcium-dependent activation of synaptic vesicle fusion"/>
    <property type="evidence" value="ECO:0000318"/>
    <property type="project" value="GO_Central"/>
</dbReference>
<dbReference type="GO" id="GO:0006886">
    <property type="term" value="P:intracellular protein transport"/>
    <property type="evidence" value="ECO:0007669"/>
    <property type="project" value="InterPro"/>
</dbReference>
<dbReference type="GO" id="GO:0045956">
    <property type="term" value="P:positive regulation of calcium ion-dependent exocytosis"/>
    <property type="evidence" value="ECO:0000318"/>
    <property type="project" value="GO_Central"/>
</dbReference>
<dbReference type="CDD" id="cd15763">
    <property type="entry name" value="FYVE_RPH3L"/>
    <property type="match status" value="1"/>
</dbReference>
<dbReference type="FunFam" id="3.30.40.10:FF:000347">
    <property type="entry name" value="rab effector Noc2 isoform X1"/>
    <property type="match status" value="1"/>
</dbReference>
<dbReference type="Gene3D" id="3.30.40.10">
    <property type="entry name" value="Zinc/RING finger domain, C3HC4 (zinc finger)"/>
    <property type="match status" value="1"/>
</dbReference>
<dbReference type="InterPro" id="IPR041282">
    <property type="entry name" value="FYVE_2"/>
</dbReference>
<dbReference type="InterPro" id="IPR041857">
    <property type="entry name" value="Noc2_FYVE"/>
</dbReference>
<dbReference type="InterPro" id="IPR010911">
    <property type="entry name" value="Rab_BD"/>
</dbReference>
<dbReference type="InterPro" id="IPR043566">
    <property type="entry name" value="Rabphilin/DOC2/Noc2"/>
</dbReference>
<dbReference type="InterPro" id="IPR017455">
    <property type="entry name" value="Znf_FYVE-rel"/>
</dbReference>
<dbReference type="InterPro" id="IPR011011">
    <property type="entry name" value="Znf_FYVE_PHD"/>
</dbReference>
<dbReference type="InterPro" id="IPR013083">
    <property type="entry name" value="Znf_RING/FYVE/PHD"/>
</dbReference>
<dbReference type="PANTHER" id="PTHR45729:SF4">
    <property type="entry name" value="RAB EFFECTOR NOC2"/>
    <property type="match status" value="1"/>
</dbReference>
<dbReference type="PANTHER" id="PTHR45729">
    <property type="entry name" value="RABPHILIN, ISOFORM A"/>
    <property type="match status" value="1"/>
</dbReference>
<dbReference type="Pfam" id="PF02318">
    <property type="entry name" value="FYVE_2"/>
    <property type="match status" value="1"/>
</dbReference>
<dbReference type="SUPFAM" id="SSF57903">
    <property type="entry name" value="FYVE/PHD zinc finger"/>
    <property type="match status" value="1"/>
</dbReference>
<dbReference type="PROSITE" id="PS50916">
    <property type="entry name" value="RABBD"/>
    <property type="match status" value="1"/>
</dbReference>
<dbReference type="PROSITE" id="PS50178">
    <property type="entry name" value="ZF_FYVE"/>
    <property type="match status" value="1"/>
</dbReference>
<feature type="chain" id="PRO_0000278262" description="Rab effector Noc2">
    <location>
        <begin position="1"/>
        <end position="292"/>
    </location>
</feature>
<feature type="domain" description="RabBD" evidence="4">
    <location>
        <begin position="41"/>
        <end position="158"/>
    </location>
</feature>
<feature type="zinc finger region" description="FYVE-type" evidence="3">
    <location>
        <begin position="89"/>
        <end position="146"/>
    </location>
</feature>
<feature type="region of interest" description="Disordered" evidence="5">
    <location>
        <begin position="175"/>
        <end position="292"/>
    </location>
</feature>
<feature type="compositionally biased region" description="Basic and acidic residues" evidence="5">
    <location>
        <begin position="221"/>
        <end position="235"/>
    </location>
</feature>
<feature type="compositionally biased region" description="Low complexity" evidence="5">
    <location>
        <begin position="257"/>
        <end position="269"/>
    </location>
</feature>
<feature type="binding site" evidence="3">
    <location>
        <position position="95"/>
    </location>
    <ligand>
        <name>Zn(2+)</name>
        <dbReference type="ChEBI" id="CHEBI:29105"/>
        <label>1</label>
    </ligand>
</feature>
<feature type="binding site" evidence="3">
    <location>
        <position position="98"/>
    </location>
    <ligand>
        <name>Zn(2+)</name>
        <dbReference type="ChEBI" id="CHEBI:29105"/>
        <label>1</label>
    </ligand>
</feature>
<feature type="binding site" evidence="3">
    <location>
        <position position="112"/>
    </location>
    <ligand>
        <name>Zn(2+)</name>
        <dbReference type="ChEBI" id="CHEBI:29105"/>
        <label>2</label>
    </ligand>
</feature>
<feature type="binding site" evidence="3">
    <location>
        <position position="115"/>
    </location>
    <ligand>
        <name>Zn(2+)</name>
        <dbReference type="ChEBI" id="CHEBI:29105"/>
        <label>2</label>
    </ligand>
</feature>
<feature type="binding site" evidence="3">
    <location>
        <position position="120"/>
    </location>
    <ligand>
        <name>Zn(2+)</name>
        <dbReference type="ChEBI" id="CHEBI:29105"/>
        <label>1</label>
    </ligand>
</feature>
<feature type="binding site" evidence="3">
    <location>
        <position position="123"/>
    </location>
    <ligand>
        <name>Zn(2+)</name>
        <dbReference type="ChEBI" id="CHEBI:29105"/>
        <label>1</label>
    </ligand>
</feature>
<feature type="binding site" evidence="3">
    <location>
        <position position="138"/>
    </location>
    <ligand>
        <name>Zn(2+)</name>
        <dbReference type="ChEBI" id="CHEBI:29105"/>
        <label>2</label>
    </ligand>
</feature>
<feature type="binding site" evidence="3">
    <location>
        <position position="141"/>
    </location>
    <ligand>
        <name>Zn(2+)</name>
        <dbReference type="ChEBI" id="CHEBI:29105"/>
        <label>2</label>
    </ligand>
</feature>
<feature type="modified residue" description="Phosphoserine" evidence="2">
    <location>
        <position position="248"/>
    </location>
</feature>
<sequence length="292" mass="32043">MADTIFGSGCDQWVCPNDRQLALRAKLHTGWSVHTYQTEKQRKSQSLSPAEVEAILQVIQRAERLDILEQQRVGRLVERLETMRRNVMGNGLSQCLLCGEVLGFLGSSSVFCKDCRKKVCTKCGIEASPSQKRPLWLCKICSEQREVWKRSGAWFYKGIPKFILPLKIPGQADHPSFRPLPVEPAEQEPRSTETSRVYTWARGRVVSSDSDSDSDLSSSSLDDRLRPAGVRDPKGNKPWGESGGSVESLKMGPTRPASCLSGSQSSLASETGTGSADPQGGPRTLAGPRGPR</sequence>
<name>RPH3L_BOVIN</name>
<protein>
    <recommendedName>
        <fullName>Rab effector Noc2</fullName>
    </recommendedName>
    <alternativeName>
        <fullName>No C2 domains protein</fullName>
    </alternativeName>
    <alternativeName>
        <fullName>Rabphilin-3A-like protein</fullName>
    </alternativeName>
</protein>
<comment type="function">
    <text evidence="1">Rab GTPase effector involved in the late steps of regulated exocytosis, both in endocrine and exocrine cells.</text>
</comment>
<comment type="subunit">
    <text evidence="1">Recruited to dense-core vesicles through specific interaction with RAB27A in endocrine cells. Interacts with RAB3A, RAB3B, RAB3C and RAB3D. Interacts with ZYX (By similarity).</text>
</comment>
<comment type="subcellular location">
    <subcellularLocation>
        <location evidence="1">Cytoplasm</location>
    </subcellularLocation>
    <subcellularLocation>
        <location evidence="1">Cytoplasmic vesicle</location>
        <location evidence="1">Secretory vesicle membrane</location>
    </subcellularLocation>
</comment>
<comment type="domain">
    <text evidence="1">The N-terminus of the RabBD domain is necessary and sufficient for interaction with RAB27A.</text>
</comment>
<gene>
    <name type="primary">RPH3AL</name>
    <name type="synonym">NOC2</name>
</gene>
<organism>
    <name type="scientific">Bos taurus</name>
    <name type="common">Bovine</name>
    <dbReference type="NCBI Taxonomy" id="9913"/>
    <lineage>
        <taxon>Eukaryota</taxon>
        <taxon>Metazoa</taxon>
        <taxon>Chordata</taxon>
        <taxon>Craniata</taxon>
        <taxon>Vertebrata</taxon>
        <taxon>Euteleostomi</taxon>
        <taxon>Mammalia</taxon>
        <taxon>Eutheria</taxon>
        <taxon>Laurasiatheria</taxon>
        <taxon>Artiodactyla</taxon>
        <taxon>Ruminantia</taxon>
        <taxon>Pecora</taxon>
        <taxon>Bovidae</taxon>
        <taxon>Bovinae</taxon>
        <taxon>Bos</taxon>
    </lineage>
</organism>
<keyword id="KW-0963">Cytoplasm</keyword>
<keyword id="KW-0968">Cytoplasmic vesicle</keyword>
<keyword id="KW-0268">Exocytosis</keyword>
<keyword id="KW-0472">Membrane</keyword>
<keyword id="KW-0479">Metal-binding</keyword>
<keyword id="KW-0597">Phosphoprotein</keyword>
<keyword id="KW-1185">Reference proteome</keyword>
<keyword id="KW-0862">Zinc</keyword>
<keyword id="KW-0863">Zinc-finger</keyword>